<proteinExistence type="inferred from homology"/>
<keyword id="KW-0961">Cell wall biogenesis/degradation</keyword>
<keyword id="KW-0328">Glycosyltransferase</keyword>
<keyword id="KW-0472">Membrane</keyword>
<keyword id="KW-1185">Reference proteome</keyword>
<keyword id="KW-0808">Transferase</keyword>
<keyword id="KW-0812">Transmembrane</keyword>
<keyword id="KW-1133">Transmembrane helix</keyword>
<gene>
    <name type="primary">mptB</name>
    <name type="ordered locus">Cgl1566</name>
    <name type="ordered locus">cg1766</name>
</gene>
<accession>Q8NQ73</accession>
<accession>Q6M526</accession>
<dbReference type="EC" id="2.4.1.-"/>
<dbReference type="EMBL" id="BA000036">
    <property type="protein sequence ID" value="BAB98959.1"/>
    <property type="status" value="ALT_INIT"/>
    <property type="molecule type" value="Genomic_DNA"/>
</dbReference>
<dbReference type="EMBL" id="BX927152">
    <property type="protein sequence ID" value="CAF21575.1"/>
    <property type="molecule type" value="Genomic_DNA"/>
</dbReference>
<dbReference type="RefSeq" id="NP_600781.1">
    <property type="nucleotide sequence ID" value="NC_003450.3"/>
</dbReference>
<dbReference type="STRING" id="196627.cg1766"/>
<dbReference type="TCDB" id="9.B.225.1.1">
    <property type="family name" value="the mannosyl transferase (mptb) family"/>
</dbReference>
<dbReference type="KEGG" id="cgb:cg1766"/>
<dbReference type="KEGG" id="cgl:Cgl1566"/>
<dbReference type="PATRIC" id="fig|196627.13.peg.1528"/>
<dbReference type="eggNOG" id="ENOG502Z9GU">
    <property type="taxonomic scope" value="Bacteria"/>
</dbReference>
<dbReference type="HOGENOM" id="CLU_023913_0_0_11"/>
<dbReference type="OrthoDB" id="5242303at2"/>
<dbReference type="BioCyc" id="CORYNE:G18NG-11151-MONOMER"/>
<dbReference type="UniPathway" id="UPA00963"/>
<dbReference type="Proteomes" id="UP000000582">
    <property type="component" value="Chromosome"/>
</dbReference>
<dbReference type="Proteomes" id="UP000001009">
    <property type="component" value="Chromosome"/>
</dbReference>
<dbReference type="GO" id="GO:0016020">
    <property type="term" value="C:membrane"/>
    <property type="evidence" value="ECO:0007669"/>
    <property type="project" value="UniProtKB-SubCell"/>
</dbReference>
<dbReference type="GO" id="GO:0016757">
    <property type="term" value="F:glycosyltransferase activity"/>
    <property type="evidence" value="ECO:0007669"/>
    <property type="project" value="UniProtKB-KW"/>
</dbReference>
<dbReference type="GO" id="GO:0045227">
    <property type="term" value="P:capsule polysaccharide biosynthetic process"/>
    <property type="evidence" value="ECO:0007669"/>
    <property type="project" value="UniProtKB-UniPathway"/>
</dbReference>
<dbReference type="GO" id="GO:0071555">
    <property type="term" value="P:cell wall organization"/>
    <property type="evidence" value="ECO:0007669"/>
    <property type="project" value="UniProtKB-KW"/>
</dbReference>
<dbReference type="InterPro" id="IPR049829">
    <property type="entry name" value="MptA/B-like"/>
</dbReference>
<dbReference type="NCBIfam" id="NF038066">
    <property type="entry name" value="MptB"/>
    <property type="match status" value="1"/>
</dbReference>
<protein>
    <recommendedName>
        <fullName>Alpha-(1-&gt;6)-mannopyranosyltransferase B</fullName>
        <shortName>MptB</shortName>
        <ecNumber>2.4.1.-</ecNumber>
    </recommendedName>
    <alternativeName>
        <fullName>Polyprenyl-1-monophosphorylmannose dependent alpha-(1-&gt;6)mannopyranosyltransferase</fullName>
        <shortName>PPM-dependent alpha-(1-&gt;6)mannopyranosyltransferase</shortName>
    </alternativeName>
</protein>
<organism>
    <name type="scientific">Corynebacterium glutamicum (strain ATCC 13032 / DSM 20300 / JCM 1318 / BCRC 11384 / CCUG 27702 / LMG 3730 / NBRC 12168 / NCIMB 10025 / NRRL B-2784 / 534)</name>
    <dbReference type="NCBI Taxonomy" id="196627"/>
    <lineage>
        <taxon>Bacteria</taxon>
        <taxon>Bacillati</taxon>
        <taxon>Actinomycetota</taxon>
        <taxon>Actinomycetes</taxon>
        <taxon>Mycobacteriales</taxon>
        <taxon>Corynebacteriaceae</taxon>
        <taxon>Corynebacterium</taxon>
    </lineage>
</organism>
<sequence>MFSAPLRRMMRVTKDEQIQPNSNAPENRKWFPRAPRPLRQFLDTLPRIGTAGSRSATLHVEDEQSPLGATLFDVATGASSINDRDTDASGLEPEKIRRFAWLRLIGTMGALMIAFGALGAGALPVVNNPYVDFPGGNFMSRMLQTSSMIVLIGVGFLVLAWVLMAPLVGIPFKRSGNRTASVSLSMLRRTFGAWVAPIMLTAPLFTQDIYSYLAQGSVTAQGMDAYAGGPLELLGPDNHLARSVPFIWAQSPSPYGPVALSIAASISVITNDSIVGGVLAHRIASLLGVVAAGWAITMLARRCRVSEEASFYLGVLNPLLILHLIGGIHNESILLGFLLVGLELGLRGTDRIQTGLWGPAWTYIALSGVLISCAGLVKVTGFIGLGFVGMALARAFHARGHRHVVAIGVAGLVQVAALVITVVVLSVITGISLGWITGQGGAATIRSWMSMTTNIGVISGFIGMNLGLGDHTAAMLVVTRAAGIAVAAAFMVRMLFATYRGHIHAVGGLGVATFVLVILFPVVHPWYMLWAIVPLASWANRLFFQLGVIAYSTAFSFFVLPRGLALPVGTVFSIYFGAALGFSILLLVGWWSLRRNPTFGLH</sequence>
<comment type="function">
    <text evidence="2">Involved in the initiation of core alpha-(1-&gt;6) mannan biosynthesis of lipomannan (LM-A) and multi-mannosylated polymer (LM-B), extending triacylatedphosphatidyl-myo-inositol dimannoside (Ac1PIM2) and mannosylated glycolipid, 1,2-di-O-C16/C18:1-(alpha-D-mannopyranosyl)-(1-&gt;4)-(alpha-D-glucopyranosyluronic acid)-(1-&gt;3)-glycerol (Man1GlcAGroAc2), respectively. Catalyzes the addition of alpha-(1-&gt;6)-mannose residue.</text>
</comment>
<comment type="pathway">
    <text>Cell wall biogenesis; cell wall polysaccharide biosynthesis.</text>
</comment>
<comment type="subcellular location">
    <subcellularLocation>
        <location evidence="4">Membrane</location>
        <topology evidence="3">Multi-pass membrane protein</topology>
    </subcellularLocation>
</comment>
<comment type="disruption phenotype">
    <text evidence="2">Cells lacking this gene are unable to synthesize lipoglycans (LM-A, LM-B and lipoarabinomannan (LAM)).</text>
</comment>
<comment type="similarity">
    <text evidence="3">Belongs to the MptA/B family.</text>
</comment>
<comment type="sequence caution" evidence="3">
    <conflict type="erroneous initiation">
        <sequence resource="EMBL-CDS" id="BAB98959"/>
    </conflict>
    <text>Truncated N-terminus.</text>
</comment>
<feature type="chain" id="PRO_0000420593" description="Alpha-(1-&gt;6)-mannopyranosyltransferase B">
    <location>
        <begin position="1"/>
        <end position="602"/>
    </location>
</feature>
<feature type="transmembrane region" description="Helical" evidence="1">
    <location>
        <begin position="105"/>
        <end position="125"/>
    </location>
</feature>
<feature type="transmembrane region" description="Helical" evidence="1">
    <location>
        <begin position="148"/>
        <end position="168"/>
    </location>
</feature>
<feature type="transmembrane region" description="Helical" evidence="1">
    <location>
        <begin position="190"/>
        <end position="210"/>
    </location>
</feature>
<feature type="transmembrane region" description="Helical" evidence="1">
    <location>
        <begin position="244"/>
        <end position="264"/>
    </location>
</feature>
<feature type="transmembrane region" description="Helical" evidence="1">
    <location>
        <begin position="274"/>
        <end position="294"/>
    </location>
</feature>
<feature type="transmembrane region" description="Helical" evidence="1">
    <location>
        <begin position="320"/>
        <end position="340"/>
    </location>
</feature>
<feature type="transmembrane region" description="Helical" evidence="1">
    <location>
        <begin position="368"/>
        <end position="388"/>
    </location>
</feature>
<feature type="transmembrane region" description="Helical" evidence="1">
    <location>
        <begin position="404"/>
        <end position="424"/>
    </location>
</feature>
<feature type="transmembrane region" description="Helical" evidence="1">
    <location>
        <begin position="448"/>
        <end position="468"/>
    </location>
</feature>
<feature type="transmembrane region" description="Helical" evidence="1">
    <location>
        <begin position="472"/>
        <end position="492"/>
    </location>
</feature>
<feature type="transmembrane region" description="Helical" evidence="1">
    <location>
        <begin position="503"/>
        <end position="523"/>
    </location>
</feature>
<feature type="transmembrane region" description="Helical" evidence="1">
    <location>
        <begin position="546"/>
        <end position="566"/>
    </location>
</feature>
<feature type="transmembrane region" description="Helical" evidence="1">
    <location>
        <begin position="571"/>
        <end position="591"/>
    </location>
</feature>
<reference key="1">
    <citation type="journal article" date="2003" name="Appl. Microbiol. Biotechnol.">
        <title>The Corynebacterium glutamicum genome: features and impacts on biotechnological processes.</title>
        <authorList>
            <person name="Ikeda M."/>
            <person name="Nakagawa S."/>
        </authorList>
    </citation>
    <scope>NUCLEOTIDE SEQUENCE [LARGE SCALE GENOMIC DNA]</scope>
    <source>
        <strain>ATCC 13032 / DSM 20300 / JCM 1318 / BCRC 11384 / CCUG 27702 / LMG 3730 / NBRC 12168 / NCIMB 10025 / NRRL B-2784 / 534</strain>
    </source>
</reference>
<reference key="2">
    <citation type="journal article" date="2003" name="J. Biotechnol.">
        <title>The complete Corynebacterium glutamicum ATCC 13032 genome sequence and its impact on the production of L-aspartate-derived amino acids and vitamins.</title>
        <authorList>
            <person name="Kalinowski J."/>
            <person name="Bathe B."/>
            <person name="Bartels D."/>
            <person name="Bischoff N."/>
            <person name="Bott M."/>
            <person name="Burkovski A."/>
            <person name="Dusch N."/>
            <person name="Eggeling L."/>
            <person name="Eikmanns B.J."/>
            <person name="Gaigalat L."/>
            <person name="Goesmann A."/>
            <person name="Hartmann M."/>
            <person name="Huthmacher K."/>
            <person name="Kraemer R."/>
            <person name="Linke B."/>
            <person name="McHardy A.C."/>
            <person name="Meyer F."/>
            <person name="Moeckel B."/>
            <person name="Pfefferle W."/>
            <person name="Puehler A."/>
            <person name="Rey D.A."/>
            <person name="Rueckert C."/>
            <person name="Rupp O."/>
            <person name="Sahm H."/>
            <person name="Wendisch V.F."/>
            <person name="Wiegraebe I."/>
            <person name="Tauch A."/>
        </authorList>
    </citation>
    <scope>NUCLEOTIDE SEQUENCE [LARGE SCALE GENOMIC DNA]</scope>
    <source>
        <strain>ATCC 13032 / DSM 20300 / JCM 1318 / BCRC 11384 / CCUG 27702 / LMG 3730 / NBRC 12168 / NCIMB 10025 / NRRL B-2784 / 534</strain>
    </source>
</reference>
<reference key="3">
    <citation type="journal article" date="2008" name="Mol. Microbiol.">
        <title>Identification of a novel alpha(1--&gt;6) mannopyranosyltransferase MptB from Corynebacterium glutamicum by deletion of a conserved gene, NCgl1505, affords a lipomannan- and lipoarabinomannan-deficient mutant.</title>
        <authorList>
            <person name="Mishra A.K."/>
            <person name="Alderwick L.J."/>
            <person name="Rittmann D."/>
            <person name="Wang C."/>
            <person name="Bhatt A."/>
            <person name="Jacobs W.R. Jr."/>
            <person name="Takayama K."/>
            <person name="Eggeling L."/>
            <person name="Besra G.S."/>
        </authorList>
    </citation>
    <scope>FUNCTION</scope>
    <scope>DISRUPTION PHENOTYPE</scope>
    <scope>SUBCELLULAR LOCATION</scope>
    <scope>NOMENCLATURE</scope>
</reference>
<name>MPTB_CORGL</name>
<evidence type="ECO:0000255" key="1"/>
<evidence type="ECO:0000269" key="2">
    <source>
    </source>
</evidence>
<evidence type="ECO:0000305" key="3"/>
<evidence type="ECO:0000305" key="4">
    <source>
    </source>
</evidence>